<sequence length="398" mass="42214">MAGFKTLDDLKDVAGKRVLLRVDLNVPVKDGEVTDTTRIERVAPTITELSDKGAKVILLAHFGRPKGKPDAEASLQPIAHAVEAVLDRRVHFASSCIGEPAKKAVDEMTGGDILLLENTRFHAGEEKNDPEFTKALAANGDIYVNDAFSAAHRAHASTEGLAHLLPAYAGRTIQAELEALQRGLGDPKRPVVAIVGGAKVSTKIDLLTNLVKKVDCLVIGGGMANTFLAARGTSVGKSLCEHDLRETAKQIMIDAAEAGCAIILPVDAVVARKFEAGAETETVDIDAVPEDAMILDVGPKSVEKVKEWLDRADTLVWNGPLGAFELSPFDKATMEVAKYAARRTRESLLVSVAGGGDTVAALNQADVSDDFSYVSTAGGAFLEWMEGKDLPGVAALQK</sequence>
<name>PGK_CHESB</name>
<comment type="catalytic activity">
    <reaction evidence="1">
        <text>(2R)-3-phosphoglycerate + ATP = (2R)-3-phospho-glyceroyl phosphate + ADP</text>
        <dbReference type="Rhea" id="RHEA:14801"/>
        <dbReference type="ChEBI" id="CHEBI:30616"/>
        <dbReference type="ChEBI" id="CHEBI:57604"/>
        <dbReference type="ChEBI" id="CHEBI:58272"/>
        <dbReference type="ChEBI" id="CHEBI:456216"/>
        <dbReference type="EC" id="2.7.2.3"/>
    </reaction>
</comment>
<comment type="pathway">
    <text evidence="1">Carbohydrate degradation; glycolysis; pyruvate from D-glyceraldehyde 3-phosphate: step 2/5.</text>
</comment>
<comment type="subunit">
    <text evidence="1">Monomer.</text>
</comment>
<comment type="subcellular location">
    <subcellularLocation>
        <location evidence="1">Cytoplasm</location>
    </subcellularLocation>
</comment>
<comment type="similarity">
    <text evidence="1">Belongs to the phosphoglycerate kinase family.</text>
</comment>
<protein>
    <recommendedName>
        <fullName evidence="1">Phosphoglycerate kinase</fullName>
        <ecNumber evidence="1">2.7.2.3</ecNumber>
    </recommendedName>
</protein>
<accession>Q11CR7</accession>
<keyword id="KW-0067">ATP-binding</keyword>
<keyword id="KW-0963">Cytoplasm</keyword>
<keyword id="KW-0324">Glycolysis</keyword>
<keyword id="KW-0418">Kinase</keyword>
<keyword id="KW-0547">Nucleotide-binding</keyword>
<keyword id="KW-0808">Transferase</keyword>
<gene>
    <name evidence="1" type="primary">pgk</name>
    <name type="ordered locus">Meso_3437</name>
</gene>
<evidence type="ECO:0000255" key="1">
    <source>
        <dbReference type="HAMAP-Rule" id="MF_00145"/>
    </source>
</evidence>
<reference key="1">
    <citation type="submission" date="2006-06" db="EMBL/GenBank/DDBJ databases">
        <title>Complete sequence of chromosome of Mesorhizobium sp. BNC1.</title>
        <authorList>
            <consortium name="US DOE Joint Genome Institute"/>
            <person name="Copeland A."/>
            <person name="Lucas S."/>
            <person name="Lapidus A."/>
            <person name="Barry K."/>
            <person name="Detter J.C."/>
            <person name="Glavina del Rio T."/>
            <person name="Hammon N."/>
            <person name="Israni S."/>
            <person name="Dalin E."/>
            <person name="Tice H."/>
            <person name="Pitluck S."/>
            <person name="Chertkov O."/>
            <person name="Brettin T."/>
            <person name="Bruce D."/>
            <person name="Han C."/>
            <person name="Tapia R."/>
            <person name="Gilna P."/>
            <person name="Schmutz J."/>
            <person name="Larimer F."/>
            <person name="Land M."/>
            <person name="Hauser L."/>
            <person name="Kyrpides N."/>
            <person name="Mikhailova N."/>
            <person name="Richardson P."/>
        </authorList>
    </citation>
    <scope>NUCLEOTIDE SEQUENCE [LARGE SCALE GENOMIC DNA]</scope>
    <source>
        <strain>BNC1</strain>
    </source>
</reference>
<organism>
    <name type="scientific">Chelativorans sp. (strain BNC1)</name>
    <dbReference type="NCBI Taxonomy" id="266779"/>
    <lineage>
        <taxon>Bacteria</taxon>
        <taxon>Pseudomonadati</taxon>
        <taxon>Pseudomonadota</taxon>
        <taxon>Alphaproteobacteria</taxon>
        <taxon>Hyphomicrobiales</taxon>
        <taxon>Phyllobacteriaceae</taxon>
        <taxon>Chelativorans</taxon>
    </lineage>
</organism>
<dbReference type="EC" id="2.7.2.3" evidence="1"/>
<dbReference type="EMBL" id="CP000390">
    <property type="protein sequence ID" value="ABG64808.1"/>
    <property type="molecule type" value="Genomic_DNA"/>
</dbReference>
<dbReference type="SMR" id="Q11CR7"/>
<dbReference type="STRING" id="266779.Meso_3437"/>
<dbReference type="KEGG" id="mes:Meso_3437"/>
<dbReference type="eggNOG" id="COG0126">
    <property type="taxonomic scope" value="Bacteria"/>
</dbReference>
<dbReference type="HOGENOM" id="CLU_025427_0_2_5"/>
<dbReference type="OrthoDB" id="9808460at2"/>
<dbReference type="UniPathway" id="UPA00109">
    <property type="reaction ID" value="UER00185"/>
</dbReference>
<dbReference type="GO" id="GO:0005829">
    <property type="term" value="C:cytosol"/>
    <property type="evidence" value="ECO:0007669"/>
    <property type="project" value="TreeGrafter"/>
</dbReference>
<dbReference type="GO" id="GO:0043531">
    <property type="term" value="F:ADP binding"/>
    <property type="evidence" value="ECO:0007669"/>
    <property type="project" value="TreeGrafter"/>
</dbReference>
<dbReference type="GO" id="GO:0005524">
    <property type="term" value="F:ATP binding"/>
    <property type="evidence" value="ECO:0007669"/>
    <property type="project" value="UniProtKB-KW"/>
</dbReference>
<dbReference type="GO" id="GO:0004618">
    <property type="term" value="F:phosphoglycerate kinase activity"/>
    <property type="evidence" value="ECO:0007669"/>
    <property type="project" value="UniProtKB-UniRule"/>
</dbReference>
<dbReference type="GO" id="GO:0006094">
    <property type="term" value="P:gluconeogenesis"/>
    <property type="evidence" value="ECO:0007669"/>
    <property type="project" value="TreeGrafter"/>
</dbReference>
<dbReference type="GO" id="GO:0006096">
    <property type="term" value="P:glycolytic process"/>
    <property type="evidence" value="ECO:0007669"/>
    <property type="project" value="UniProtKB-UniRule"/>
</dbReference>
<dbReference type="CDD" id="cd00318">
    <property type="entry name" value="Phosphoglycerate_kinase"/>
    <property type="match status" value="1"/>
</dbReference>
<dbReference type="FunFam" id="3.40.50.1260:FF:000006">
    <property type="entry name" value="Phosphoglycerate kinase"/>
    <property type="match status" value="1"/>
</dbReference>
<dbReference type="FunFam" id="3.40.50.1260:FF:000031">
    <property type="entry name" value="Phosphoglycerate kinase 1"/>
    <property type="match status" value="1"/>
</dbReference>
<dbReference type="Gene3D" id="3.40.50.1260">
    <property type="entry name" value="Phosphoglycerate kinase, N-terminal domain"/>
    <property type="match status" value="2"/>
</dbReference>
<dbReference type="HAMAP" id="MF_00145">
    <property type="entry name" value="Phosphoglyc_kinase"/>
    <property type="match status" value="1"/>
</dbReference>
<dbReference type="InterPro" id="IPR001576">
    <property type="entry name" value="Phosphoglycerate_kinase"/>
</dbReference>
<dbReference type="InterPro" id="IPR015911">
    <property type="entry name" value="Phosphoglycerate_kinase_CS"/>
</dbReference>
<dbReference type="InterPro" id="IPR015824">
    <property type="entry name" value="Phosphoglycerate_kinase_N"/>
</dbReference>
<dbReference type="InterPro" id="IPR036043">
    <property type="entry name" value="Phosphoglycerate_kinase_sf"/>
</dbReference>
<dbReference type="PANTHER" id="PTHR11406">
    <property type="entry name" value="PHOSPHOGLYCERATE KINASE"/>
    <property type="match status" value="1"/>
</dbReference>
<dbReference type="PANTHER" id="PTHR11406:SF23">
    <property type="entry name" value="PHOSPHOGLYCERATE KINASE 1, CHLOROPLASTIC-RELATED"/>
    <property type="match status" value="1"/>
</dbReference>
<dbReference type="Pfam" id="PF00162">
    <property type="entry name" value="PGK"/>
    <property type="match status" value="1"/>
</dbReference>
<dbReference type="PIRSF" id="PIRSF000724">
    <property type="entry name" value="Pgk"/>
    <property type="match status" value="1"/>
</dbReference>
<dbReference type="PRINTS" id="PR00477">
    <property type="entry name" value="PHGLYCKINASE"/>
</dbReference>
<dbReference type="SUPFAM" id="SSF53748">
    <property type="entry name" value="Phosphoglycerate kinase"/>
    <property type="match status" value="1"/>
</dbReference>
<dbReference type="PROSITE" id="PS00111">
    <property type="entry name" value="PGLYCERATE_KINASE"/>
    <property type="match status" value="1"/>
</dbReference>
<proteinExistence type="inferred from homology"/>
<feature type="chain" id="PRO_1000203338" description="Phosphoglycerate kinase">
    <location>
        <begin position="1"/>
        <end position="398"/>
    </location>
</feature>
<feature type="binding site" evidence="1">
    <location>
        <begin position="23"/>
        <end position="25"/>
    </location>
    <ligand>
        <name>substrate</name>
    </ligand>
</feature>
<feature type="binding site" evidence="1">
    <location>
        <position position="38"/>
    </location>
    <ligand>
        <name>substrate</name>
    </ligand>
</feature>
<feature type="binding site" evidence="1">
    <location>
        <begin position="61"/>
        <end position="64"/>
    </location>
    <ligand>
        <name>substrate</name>
    </ligand>
</feature>
<feature type="binding site" evidence="1">
    <location>
        <position position="120"/>
    </location>
    <ligand>
        <name>substrate</name>
    </ligand>
</feature>
<feature type="binding site" evidence="1">
    <location>
        <position position="153"/>
    </location>
    <ligand>
        <name>substrate</name>
    </ligand>
</feature>
<feature type="binding site" evidence="1">
    <location>
        <position position="203"/>
    </location>
    <ligand>
        <name>ATP</name>
        <dbReference type="ChEBI" id="CHEBI:30616"/>
    </ligand>
</feature>
<feature type="binding site" evidence="1">
    <location>
        <position position="325"/>
    </location>
    <ligand>
        <name>ATP</name>
        <dbReference type="ChEBI" id="CHEBI:30616"/>
    </ligand>
</feature>
<feature type="binding site" evidence="1">
    <location>
        <begin position="355"/>
        <end position="358"/>
    </location>
    <ligand>
        <name>ATP</name>
        <dbReference type="ChEBI" id="CHEBI:30616"/>
    </ligand>
</feature>